<protein>
    <recommendedName>
        <fullName evidence="1">Phosphopantetheine adenylyltransferase</fullName>
        <ecNumber evidence="1">2.7.7.3</ecNumber>
    </recommendedName>
    <alternativeName>
        <fullName evidence="1">Dephospho-CoA pyrophosphorylase</fullName>
    </alternativeName>
    <alternativeName>
        <fullName evidence="1">Pantetheine-phosphate adenylyltransferase</fullName>
        <shortName evidence="1">PPAT</shortName>
    </alternativeName>
</protein>
<proteinExistence type="inferred from homology"/>
<name>COAD_CLOPE</name>
<keyword id="KW-0067">ATP-binding</keyword>
<keyword id="KW-0173">Coenzyme A biosynthesis</keyword>
<keyword id="KW-0963">Cytoplasm</keyword>
<keyword id="KW-0460">Magnesium</keyword>
<keyword id="KW-0547">Nucleotide-binding</keyword>
<keyword id="KW-0548">Nucleotidyltransferase</keyword>
<keyword id="KW-1185">Reference proteome</keyword>
<keyword id="KW-0808">Transferase</keyword>
<sequence>MRVGVYPGSFDPITKGHLDLIERAASKFDKVIVAVLININKKGMFSIEERVNLIEKCVAKYNNVEVKSFNGLLIDFVRKEKADVIIKGLRSVTDFEYEFQMALMNRELANEVETVFMVTSPNYSYISSSAIKQVASFNGEIKNFVPKEIVEDLEERIISLRGEG</sequence>
<dbReference type="EC" id="2.7.7.3" evidence="1"/>
<dbReference type="EMBL" id="BA000016">
    <property type="protein sequence ID" value="BAB81435.1"/>
    <property type="molecule type" value="Genomic_DNA"/>
</dbReference>
<dbReference type="RefSeq" id="WP_003458450.1">
    <property type="nucleotide sequence ID" value="NC_003366.1"/>
</dbReference>
<dbReference type="SMR" id="Q8XJM7"/>
<dbReference type="STRING" id="195102.gene:10490993"/>
<dbReference type="GeneID" id="93001734"/>
<dbReference type="KEGG" id="cpe:CPE1729"/>
<dbReference type="HOGENOM" id="CLU_100149_0_1_9"/>
<dbReference type="UniPathway" id="UPA00241">
    <property type="reaction ID" value="UER00355"/>
</dbReference>
<dbReference type="Proteomes" id="UP000000818">
    <property type="component" value="Chromosome"/>
</dbReference>
<dbReference type="GO" id="GO:0005737">
    <property type="term" value="C:cytoplasm"/>
    <property type="evidence" value="ECO:0007669"/>
    <property type="project" value="UniProtKB-SubCell"/>
</dbReference>
<dbReference type="GO" id="GO:0005524">
    <property type="term" value="F:ATP binding"/>
    <property type="evidence" value="ECO:0007669"/>
    <property type="project" value="UniProtKB-KW"/>
</dbReference>
<dbReference type="GO" id="GO:0004595">
    <property type="term" value="F:pantetheine-phosphate adenylyltransferase activity"/>
    <property type="evidence" value="ECO:0007669"/>
    <property type="project" value="UniProtKB-UniRule"/>
</dbReference>
<dbReference type="GO" id="GO:0015937">
    <property type="term" value="P:coenzyme A biosynthetic process"/>
    <property type="evidence" value="ECO:0007669"/>
    <property type="project" value="UniProtKB-UniRule"/>
</dbReference>
<dbReference type="CDD" id="cd02163">
    <property type="entry name" value="PPAT"/>
    <property type="match status" value="1"/>
</dbReference>
<dbReference type="Gene3D" id="3.40.50.620">
    <property type="entry name" value="HUPs"/>
    <property type="match status" value="1"/>
</dbReference>
<dbReference type="HAMAP" id="MF_00151">
    <property type="entry name" value="PPAT_bact"/>
    <property type="match status" value="1"/>
</dbReference>
<dbReference type="InterPro" id="IPR004821">
    <property type="entry name" value="Cyt_trans-like"/>
</dbReference>
<dbReference type="InterPro" id="IPR001980">
    <property type="entry name" value="PPAT"/>
</dbReference>
<dbReference type="InterPro" id="IPR014729">
    <property type="entry name" value="Rossmann-like_a/b/a_fold"/>
</dbReference>
<dbReference type="NCBIfam" id="TIGR01510">
    <property type="entry name" value="coaD_prev_kdtB"/>
    <property type="match status" value="1"/>
</dbReference>
<dbReference type="NCBIfam" id="TIGR00125">
    <property type="entry name" value="cyt_tran_rel"/>
    <property type="match status" value="1"/>
</dbReference>
<dbReference type="PANTHER" id="PTHR21342">
    <property type="entry name" value="PHOSPHOPANTETHEINE ADENYLYLTRANSFERASE"/>
    <property type="match status" value="1"/>
</dbReference>
<dbReference type="PANTHER" id="PTHR21342:SF1">
    <property type="entry name" value="PHOSPHOPANTETHEINE ADENYLYLTRANSFERASE"/>
    <property type="match status" value="1"/>
</dbReference>
<dbReference type="Pfam" id="PF01467">
    <property type="entry name" value="CTP_transf_like"/>
    <property type="match status" value="1"/>
</dbReference>
<dbReference type="PRINTS" id="PR01020">
    <property type="entry name" value="LPSBIOSNTHSS"/>
</dbReference>
<dbReference type="SUPFAM" id="SSF52374">
    <property type="entry name" value="Nucleotidylyl transferase"/>
    <property type="match status" value="1"/>
</dbReference>
<reference key="1">
    <citation type="journal article" date="2002" name="Proc. Natl. Acad. Sci. U.S.A.">
        <title>Complete genome sequence of Clostridium perfringens, an anaerobic flesh-eater.</title>
        <authorList>
            <person name="Shimizu T."/>
            <person name="Ohtani K."/>
            <person name="Hirakawa H."/>
            <person name="Ohshima K."/>
            <person name="Yamashita A."/>
            <person name="Shiba T."/>
            <person name="Ogasawara N."/>
            <person name="Hattori M."/>
            <person name="Kuhara S."/>
            <person name="Hayashi H."/>
        </authorList>
    </citation>
    <scope>NUCLEOTIDE SEQUENCE [LARGE SCALE GENOMIC DNA]</scope>
    <source>
        <strain>13 / Type A</strain>
    </source>
</reference>
<accession>Q8XJM7</accession>
<evidence type="ECO:0000255" key="1">
    <source>
        <dbReference type="HAMAP-Rule" id="MF_00151"/>
    </source>
</evidence>
<organism>
    <name type="scientific">Clostridium perfringens (strain 13 / Type A)</name>
    <dbReference type="NCBI Taxonomy" id="195102"/>
    <lineage>
        <taxon>Bacteria</taxon>
        <taxon>Bacillati</taxon>
        <taxon>Bacillota</taxon>
        <taxon>Clostridia</taxon>
        <taxon>Eubacteriales</taxon>
        <taxon>Clostridiaceae</taxon>
        <taxon>Clostridium</taxon>
    </lineage>
</organism>
<gene>
    <name evidence="1" type="primary">coaD</name>
    <name type="ordered locus">CPE1729</name>
</gene>
<feature type="chain" id="PRO_0000156195" description="Phosphopantetheine adenylyltransferase">
    <location>
        <begin position="1"/>
        <end position="164"/>
    </location>
</feature>
<feature type="binding site" evidence="1">
    <location>
        <begin position="9"/>
        <end position="10"/>
    </location>
    <ligand>
        <name>ATP</name>
        <dbReference type="ChEBI" id="CHEBI:30616"/>
    </ligand>
</feature>
<feature type="binding site" evidence="1">
    <location>
        <position position="9"/>
    </location>
    <ligand>
        <name>substrate</name>
    </ligand>
</feature>
<feature type="binding site" evidence="1">
    <location>
        <position position="17"/>
    </location>
    <ligand>
        <name>ATP</name>
        <dbReference type="ChEBI" id="CHEBI:30616"/>
    </ligand>
</feature>
<feature type="binding site" evidence="1">
    <location>
        <position position="41"/>
    </location>
    <ligand>
        <name>substrate</name>
    </ligand>
</feature>
<feature type="binding site" evidence="1">
    <location>
        <position position="73"/>
    </location>
    <ligand>
        <name>substrate</name>
    </ligand>
</feature>
<feature type="binding site" evidence="1">
    <location>
        <position position="87"/>
    </location>
    <ligand>
        <name>substrate</name>
    </ligand>
</feature>
<feature type="binding site" evidence="1">
    <location>
        <begin position="88"/>
        <end position="90"/>
    </location>
    <ligand>
        <name>ATP</name>
        <dbReference type="ChEBI" id="CHEBI:30616"/>
    </ligand>
</feature>
<feature type="binding site" evidence="1">
    <location>
        <position position="98"/>
    </location>
    <ligand>
        <name>ATP</name>
        <dbReference type="ChEBI" id="CHEBI:30616"/>
    </ligand>
</feature>
<feature type="binding site" evidence="1">
    <location>
        <begin position="123"/>
        <end position="129"/>
    </location>
    <ligand>
        <name>ATP</name>
        <dbReference type="ChEBI" id="CHEBI:30616"/>
    </ligand>
</feature>
<feature type="site" description="Transition state stabilizer" evidence="1">
    <location>
        <position position="17"/>
    </location>
</feature>
<comment type="function">
    <text evidence="1">Reversibly transfers an adenylyl group from ATP to 4'-phosphopantetheine, yielding dephospho-CoA (dPCoA) and pyrophosphate.</text>
</comment>
<comment type="catalytic activity">
    <reaction evidence="1">
        <text>(R)-4'-phosphopantetheine + ATP + H(+) = 3'-dephospho-CoA + diphosphate</text>
        <dbReference type="Rhea" id="RHEA:19801"/>
        <dbReference type="ChEBI" id="CHEBI:15378"/>
        <dbReference type="ChEBI" id="CHEBI:30616"/>
        <dbReference type="ChEBI" id="CHEBI:33019"/>
        <dbReference type="ChEBI" id="CHEBI:57328"/>
        <dbReference type="ChEBI" id="CHEBI:61723"/>
        <dbReference type="EC" id="2.7.7.3"/>
    </reaction>
</comment>
<comment type="cofactor">
    <cofactor evidence="1">
        <name>Mg(2+)</name>
        <dbReference type="ChEBI" id="CHEBI:18420"/>
    </cofactor>
</comment>
<comment type="pathway">
    <text evidence="1">Cofactor biosynthesis; coenzyme A biosynthesis; CoA from (R)-pantothenate: step 4/5.</text>
</comment>
<comment type="subunit">
    <text evidence="1">Homohexamer.</text>
</comment>
<comment type="subcellular location">
    <subcellularLocation>
        <location evidence="1">Cytoplasm</location>
    </subcellularLocation>
</comment>
<comment type="similarity">
    <text evidence="1">Belongs to the bacterial CoaD family.</text>
</comment>